<dbReference type="EC" id="2.7.2.3" evidence="1"/>
<dbReference type="EMBL" id="CP000095">
    <property type="protein sequence ID" value="AAZ59050.1"/>
    <property type="molecule type" value="Genomic_DNA"/>
</dbReference>
<dbReference type="RefSeq" id="WP_011294195.1">
    <property type="nucleotide sequence ID" value="NC_007335.2"/>
</dbReference>
<dbReference type="SMR" id="Q46HH8"/>
<dbReference type="STRING" id="59920.PMN2A_1562"/>
<dbReference type="KEGG" id="pmn:PMN2A_1562"/>
<dbReference type="HOGENOM" id="CLU_025427_0_2_3"/>
<dbReference type="OrthoDB" id="9808460at2"/>
<dbReference type="PhylomeDB" id="Q46HH8"/>
<dbReference type="UniPathway" id="UPA00109">
    <property type="reaction ID" value="UER00185"/>
</dbReference>
<dbReference type="Proteomes" id="UP000002535">
    <property type="component" value="Chromosome"/>
</dbReference>
<dbReference type="GO" id="GO:0005829">
    <property type="term" value="C:cytosol"/>
    <property type="evidence" value="ECO:0007669"/>
    <property type="project" value="TreeGrafter"/>
</dbReference>
<dbReference type="GO" id="GO:0043531">
    <property type="term" value="F:ADP binding"/>
    <property type="evidence" value="ECO:0007669"/>
    <property type="project" value="TreeGrafter"/>
</dbReference>
<dbReference type="GO" id="GO:0005524">
    <property type="term" value="F:ATP binding"/>
    <property type="evidence" value="ECO:0007669"/>
    <property type="project" value="UniProtKB-KW"/>
</dbReference>
<dbReference type="GO" id="GO:0004618">
    <property type="term" value="F:phosphoglycerate kinase activity"/>
    <property type="evidence" value="ECO:0007669"/>
    <property type="project" value="UniProtKB-UniRule"/>
</dbReference>
<dbReference type="GO" id="GO:0006094">
    <property type="term" value="P:gluconeogenesis"/>
    <property type="evidence" value="ECO:0007669"/>
    <property type="project" value="TreeGrafter"/>
</dbReference>
<dbReference type="GO" id="GO:0006096">
    <property type="term" value="P:glycolytic process"/>
    <property type="evidence" value="ECO:0007669"/>
    <property type="project" value="UniProtKB-UniRule"/>
</dbReference>
<dbReference type="CDD" id="cd00318">
    <property type="entry name" value="Phosphoglycerate_kinase"/>
    <property type="match status" value="1"/>
</dbReference>
<dbReference type="FunFam" id="3.40.50.1260:FF:000003">
    <property type="entry name" value="Phosphoglycerate kinase"/>
    <property type="match status" value="1"/>
</dbReference>
<dbReference type="FunFam" id="3.40.50.1260:FF:000006">
    <property type="entry name" value="Phosphoglycerate kinase"/>
    <property type="match status" value="1"/>
</dbReference>
<dbReference type="Gene3D" id="3.40.50.1260">
    <property type="entry name" value="Phosphoglycerate kinase, N-terminal domain"/>
    <property type="match status" value="2"/>
</dbReference>
<dbReference type="HAMAP" id="MF_00145">
    <property type="entry name" value="Phosphoglyc_kinase"/>
    <property type="match status" value="1"/>
</dbReference>
<dbReference type="InterPro" id="IPR001576">
    <property type="entry name" value="Phosphoglycerate_kinase"/>
</dbReference>
<dbReference type="InterPro" id="IPR015911">
    <property type="entry name" value="Phosphoglycerate_kinase_CS"/>
</dbReference>
<dbReference type="InterPro" id="IPR015824">
    <property type="entry name" value="Phosphoglycerate_kinase_N"/>
</dbReference>
<dbReference type="InterPro" id="IPR036043">
    <property type="entry name" value="Phosphoglycerate_kinase_sf"/>
</dbReference>
<dbReference type="PANTHER" id="PTHR11406">
    <property type="entry name" value="PHOSPHOGLYCERATE KINASE"/>
    <property type="match status" value="1"/>
</dbReference>
<dbReference type="PANTHER" id="PTHR11406:SF23">
    <property type="entry name" value="PHOSPHOGLYCERATE KINASE 1, CHLOROPLASTIC-RELATED"/>
    <property type="match status" value="1"/>
</dbReference>
<dbReference type="Pfam" id="PF00162">
    <property type="entry name" value="PGK"/>
    <property type="match status" value="1"/>
</dbReference>
<dbReference type="PIRSF" id="PIRSF000724">
    <property type="entry name" value="Pgk"/>
    <property type="match status" value="1"/>
</dbReference>
<dbReference type="PRINTS" id="PR00477">
    <property type="entry name" value="PHGLYCKINASE"/>
</dbReference>
<dbReference type="SUPFAM" id="SSF53748">
    <property type="entry name" value="Phosphoglycerate kinase"/>
    <property type="match status" value="1"/>
</dbReference>
<dbReference type="PROSITE" id="PS00111">
    <property type="entry name" value="PGLYCERATE_KINASE"/>
    <property type="match status" value="1"/>
</dbReference>
<sequence length="401" mass="42359">MSKRSLSSLGAEDLCGKRVLVRVDFNVPLGDEGLITDDTRIRAALPTINDLLDKSARVILSAHFGRPKGQVNETMRLTAVAQRLSELLGKTVVKTESCIGAEAKSKVDAMSNGDVVLLENVRFISGEEKNDTEFAKELASLAEVYVNDAFGAAHRAHASTEGVTKFLSPCVAGYLMEKELKYLQGAIDQPQSPLAAIVGGSKVSSKIGVLESLIDKCDKIIVGGGMIFTFYKARGLSVGNSLVEEDKLELASALEKKAQEKGVEFLLPTDVVLADNFSPDANSKLSKVDAISEGWMGLDIGSESVELFQNALKDCKTVIWNGPMGVFEFEKFANGTNAIANTLAELSAQGCCTIIGGGDSVAAVEKAGLAKKMSHISTGGGASLELLEGKVLPGVSALDDA</sequence>
<proteinExistence type="inferred from homology"/>
<comment type="catalytic activity">
    <reaction evidence="1">
        <text>(2R)-3-phosphoglycerate + ATP = (2R)-3-phospho-glyceroyl phosphate + ADP</text>
        <dbReference type="Rhea" id="RHEA:14801"/>
        <dbReference type="ChEBI" id="CHEBI:30616"/>
        <dbReference type="ChEBI" id="CHEBI:57604"/>
        <dbReference type="ChEBI" id="CHEBI:58272"/>
        <dbReference type="ChEBI" id="CHEBI:456216"/>
        <dbReference type="EC" id="2.7.2.3"/>
    </reaction>
</comment>
<comment type="pathway">
    <text evidence="1">Carbohydrate degradation; glycolysis; pyruvate from D-glyceraldehyde 3-phosphate: step 2/5.</text>
</comment>
<comment type="subunit">
    <text evidence="1">Monomer.</text>
</comment>
<comment type="subcellular location">
    <subcellularLocation>
        <location evidence="1">Cytoplasm</location>
    </subcellularLocation>
</comment>
<comment type="similarity">
    <text evidence="1">Belongs to the phosphoglycerate kinase family.</text>
</comment>
<name>PGK_PROMT</name>
<feature type="chain" id="PRO_1000058032" description="Phosphoglycerate kinase">
    <location>
        <begin position="1"/>
        <end position="401"/>
    </location>
</feature>
<feature type="binding site" evidence="1">
    <location>
        <begin position="24"/>
        <end position="26"/>
    </location>
    <ligand>
        <name>substrate</name>
    </ligand>
</feature>
<feature type="binding site" evidence="1">
    <location>
        <position position="40"/>
    </location>
    <ligand>
        <name>substrate</name>
    </ligand>
</feature>
<feature type="binding site" evidence="1">
    <location>
        <begin position="63"/>
        <end position="66"/>
    </location>
    <ligand>
        <name>substrate</name>
    </ligand>
</feature>
<feature type="binding site" evidence="1">
    <location>
        <position position="122"/>
    </location>
    <ligand>
        <name>substrate</name>
    </ligand>
</feature>
<feature type="binding site" evidence="1">
    <location>
        <position position="155"/>
    </location>
    <ligand>
        <name>substrate</name>
    </ligand>
</feature>
<feature type="binding site" evidence="1">
    <location>
        <position position="206"/>
    </location>
    <ligand>
        <name>ATP</name>
        <dbReference type="ChEBI" id="CHEBI:30616"/>
    </ligand>
</feature>
<feature type="binding site" evidence="1">
    <location>
        <position position="297"/>
    </location>
    <ligand>
        <name>ATP</name>
        <dbReference type="ChEBI" id="CHEBI:30616"/>
    </ligand>
</feature>
<feature type="binding site" evidence="1">
    <location>
        <position position="328"/>
    </location>
    <ligand>
        <name>ATP</name>
        <dbReference type="ChEBI" id="CHEBI:30616"/>
    </ligand>
</feature>
<feature type="binding site" evidence="1">
    <location>
        <begin position="357"/>
        <end position="360"/>
    </location>
    <ligand>
        <name>ATP</name>
        <dbReference type="ChEBI" id="CHEBI:30616"/>
    </ligand>
</feature>
<gene>
    <name evidence="1" type="primary">pgk</name>
    <name type="ordered locus">PMN2A_1562</name>
</gene>
<evidence type="ECO:0000255" key="1">
    <source>
        <dbReference type="HAMAP-Rule" id="MF_00145"/>
    </source>
</evidence>
<organism>
    <name type="scientific">Prochlorococcus marinus (strain NATL2A)</name>
    <dbReference type="NCBI Taxonomy" id="59920"/>
    <lineage>
        <taxon>Bacteria</taxon>
        <taxon>Bacillati</taxon>
        <taxon>Cyanobacteriota</taxon>
        <taxon>Cyanophyceae</taxon>
        <taxon>Synechococcales</taxon>
        <taxon>Prochlorococcaceae</taxon>
        <taxon>Prochlorococcus</taxon>
    </lineage>
</organism>
<keyword id="KW-0067">ATP-binding</keyword>
<keyword id="KW-0963">Cytoplasm</keyword>
<keyword id="KW-0324">Glycolysis</keyword>
<keyword id="KW-0418">Kinase</keyword>
<keyword id="KW-0547">Nucleotide-binding</keyword>
<keyword id="KW-1185">Reference proteome</keyword>
<keyword id="KW-0808">Transferase</keyword>
<accession>Q46HH8</accession>
<reference key="1">
    <citation type="journal article" date="2007" name="PLoS Genet.">
        <title>Patterns and implications of gene gain and loss in the evolution of Prochlorococcus.</title>
        <authorList>
            <person name="Kettler G.C."/>
            <person name="Martiny A.C."/>
            <person name="Huang K."/>
            <person name="Zucker J."/>
            <person name="Coleman M.L."/>
            <person name="Rodrigue S."/>
            <person name="Chen F."/>
            <person name="Lapidus A."/>
            <person name="Ferriera S."/>
            <person name="Johnson J."/>
            <person name="Steglich C."/>
            <person name="Church G.M."/>
            <person name="Richardson P."/>
            <person name="Chisholm S.W."/>
        </authorList>
    </citation>
    <scope>NUCLEOTIDE SEQUENCE [LARGE SCALE GENOMIC DNA]</scope>
    <source>
        <strain>NATL2A</strain>
    </source>
</reference>
<protein>
    <recommendedName>
        <fullName evidence="1">Phosphoglycerate kinase</fullName>
        <ecNumber evidence="1">2.7.2.3</ecNumber>
    </recommendedName>
</protein>